<feature type="chain" id="PRO_0000192137" description="Bifunctional purine biosynthesis protein PurH">
    <location>
        <begin position="1"/>
        <end position="515"/>
    </location>
</feature>
<feature type="domain" description="MGS-like" evidence="2">
    <location>
        <begin position="1"/>
        <end position="145"/>
    </location>
</feature>
<proteinExistence type="inferred from homology"/>
<accession>Q5XEF2</accession>
<sequence length="515" mass="56187">MTKRALISVSDKSGIIDFAKELKNLGWDIISTGGTKVALDNAGVETIAIDDVTGFPEMMDGRVKTLHPNIHGGLLARRDVDSHLQAAKDNNIELIDLVVVNLYPFKETILRPDVTYDLAVENIDIGGPSMLRSAAKNHASVTVVVDPADYATVLGELADAGQTTFETRQRLAAKVFRHIAAYDALIAEYFTAQVGEAKPEKLTITYDLKQAMRYGENPQQDADFYQKALPTDYSIASAKQLNGKELSFNNIRDVDAAIRIIRDFKDRPTVVALKHMNPCGIGQADDIETAWDYAYEADPVSIFGGIVVLNREVDAATAKKMHPIFLEIIIAPSYSEEALAILTNKKKNLRILELPFDAQAASEVEAEYTGVVGGLLVQNQDVVAENPSDWQVVTDRQPTEQEATALEFAWKAIKYVKSNGIIITNDHMTLGLGAGQTNRVGSVKIAIEQAKDHLDGAVLASDAFFPFADNIEEVAAAGVKAIIQPGGSVRDQDSIDAANKHGLTMIFTGVRHFRH</sequence>
<protein>
    <recommendedName>
        <fullName evidence="1">Bifunctional purine biosynthesis protein PurH</fullName>
    </recommendedName>
    <domain>
        <recommendedName>
            <fullName evidence="1">Phosphoribosylaminoimidazolecarboxamide formyltransferase</fullName>
            <ecNumber evidence="1">2.1.2.3</ecNumber>
        </recommendedName>
        <alternativeName>
            <fullName evidence="1">AICAR transformylase</fullName>
        </alternativeName>
    </domain>
    <domain>
        <recommendedName>
            <fullName evidence="1">IMP cyclohydrolase</fullName>
            <ecNumber evidence="1">3.5.4.10</ecNumber>
        </recommendedName>
        <alternativeName>
            <fullName evidence="1">ATIC</fullName>
        </alternativeName>
        <alternativeName>
            <fullName evidence="1">IMP synthase</fullName>
        </alternativeName>
        <alternativeName>
            <fullName evidence="1">Inosinicase</fullName>
        </alternativeName>
    </domain>
</protein>
<gene>
    <name evidence="1" type="primary">purH</name>
    <name type="ordered locus">M6_Spy0076</name>
</gene>
<reference key="1">
    <citation type="journal article" date="2004" name="J. Infect. Dis.">
        <title>Progress toward characterization of the group A Streptococcus metagenome: complete genome sequence of a macrolide-resistant serotype M6 strain.</title>
        <authorList>
            <person name="Banks D.J."/>
            <person name="Porcella S.F."/>
            <person name="Barbian K.D."/>
            <person name="Beres S.B."/>
            <person name="Philips L.E."/>
            <person name="Voyich J.M."/>
            <person name="DeLeo F.R."/>
            <person name="Martin J.M."/>
            <person name="Somerville G.A."/>
            <person name="Musser J.M."/>
        </authorList>
    </citation>
    <scope>NUCLEOTIDE SEQUENCE [LARGE SCALE GENOMIC DNA]</scope>
    <source>
        <strain>ATCC BAA-946 / MGAS10394</strain>
    </source>
</reference>
<comment type="catalytic activity">
    <reaction evidence="1">
        <text>(6R)-10-formyltetrahydrofolate + 5-amino-1-(5-phospho-beta-D-ribosyl)imidazole-4-carboxamide = 5-formamido-1-(5-phospho-D-ribosyl)imidazole-4-carboxamide + (6S)-5,6,7,8-tetrahydrofolate</text>
        <dbReference type="Rhea" id="RHEA:22192"/>
        <dbReference type="ChEBI" id="CHEBI:57453"/>
        <dbReference type="ChEBI" id="CHEBI:58467"/>
        <dbReference type="ChEBI" id="CHEBI:58475"/>
        <dbReference type="ChEBI" id="CHEBI:195366"/>
        <dbReference type="EC" id="2.1.2.3"/>
    </reaction>
</comment>
<comment type="catalytic activity">
    <reaction evidence="1">
        <text>IMP + H2O = 5-formamido-1-(5-phospho-D-ribosyl)imidazole-4-carboxamide</text>
        <dbReference type="Rhea" id="RHEA:18445"/>
        <dbReference type="ChEBI" id="CHEBI:15377"/>
        <dbReference type="ChEBI" id="CHEBI:58053"/>
        <dbReference type="ChEBI" id="CHEBI:58467"/>
        <dbReference type="EC" id="3.5.4.10"/>
    </reaction>
</comment>
<comment type="pathway">
    <text evidence="1">Purine metabolism; IMP biosynthesis via de novo pathway; 5-formamido-1-(5-phospho-D-ribosyl)imidazole-4-carboxamide from 5-amino-1-(5-phospho-D-ribosyl)imidazole-4-carboxamide (10-formyl THF route): step 1/1.</text>
</comment>
<comment type="pathway">
    <text evidence="1">Purine metabolism; IMP biosynthesis via de novo pathway; IMP from 5-formamido-1-(5-phospho-D-ribosyl)imidazole-4-carboxamide: step 1/1.</text>
</comment>
<comment type="domain">
    <text evidence="1">The IMP cyclohydrolase activity resides in the N-terminal region.</text>
</comment>
<comment type="similarity">
    <text evidence="1">Belongs to the PurH family.</text>
</comment>
<evidence type="ECO:0000255" key="1">
    <source>
        <dbReference type="HAMAP-Rule" id="MF_00139"/>
    </source>
</evidence>
<evidence type="ECO:0000255" key="2">
    <source>
        <dbReference type="PROSITE-ProRule" id="PRU01202"/>
    </source>
</evidence>
<name>PUR9_STRP6</name>
<dbReference type="EC" id="2.1.2.3" evidence="1"/>
<dbReference type="EC" id="3.5.4.10" evidence="1"/>
<dbReference type="EMBL" id="CP000003">
    <property type="protein sequence ID" value="AAT86211.1"/>
    <property type="molecule type" value="Genomic_DNA"/>
</dbReference>
<dbReference type="RefSeq" id="WP_011184063.1">
    <property type="nucleotide sequence ID" value="NC_006086.1"/>
</dbReference>
<dbReference type="SMR" id="Q5XEF2"/>
<dbReference type="KEGG" id="spa:M6_Spy0076"/>
<dbReference type="HOGENOM" id="CLU_016316_5_2_9"/>
<dbReference type="UniPathway" id="UPA00074">
    <property type="reaction ID" value="UER00133"/>
</dbReference>
<dbReference type="UniPathway" id="UPA00074">
    <property type="reaction ID" value="UER00135"/>
</dbReference>
<dbReference type="Proteomes" id="UP000001167">
    <property type="component" value="Chromosome"/>
</dbReference>
<dbReference type="GO" id="GO:0005829">
    <property type="term" value="C:cytosol"/>
    <property type="evidence" value="ECO:0007669"/>
    <property type="project" value="TreeGrafter"/>
</dbReference>
<dbReference type="GO" id="GO:0003937">
    <property type="term" value="F:IMP cyclohydrolase activity"/>
    <property type="evidence" value="ECO:0007669"/>
    <property type="project" value="UniProtKB-UniRule"/>
</dbReference>
<dbReference type="GO" id="GO:0004643">
    <property type="term" value="F:phosphoribosylaminoimidazolecarboxamide formyltransferase activity"/>
    <property type="evidence" value="ECO:0007669"/>
    <property type="project" value="UniProtKB-UniRule"/>
</dbReference>
<dbReference type="GO" id="GO:0006189">
    <property type="term" value="P:'de novo' IMP biosynthetic process"/>
    <property type="evidence" value="ECO:0007669"/>
    <property type="project" value="UniProtKB-UniRule"/>
</dbReference>
<dbReference type="CDD" id="cd01421">
    <property type="entry name" value="IMPCH"/>
    <property type="match status" value="1"/>
</dbReference>
<dbReference type="FunFam" id="3.40.140.20:FF:000001">
    <property type="entry name" value="Bifunctional purine biosynthesis protein PurH"/>
    <property type="match status" value="1"/>
</dbReference>
<dbReference type="FunFam" id="3.40.140.20:FF:000002">
    <property type="entry name" value="Bifunctional purine biosynthesis protein PurH"/>
    <property type="match status" value="1"/>
</dbReference>
<dbReference type="FunFam" id="3.40.50.1380:FF:000001">
    <property type="entry name" value="Bifunctional purine biosynthesis protein PurH"/>
    <property type="match status" value="1"/>
</dbReference>
<dbReference type="Gene3D" id="3.40.140.20">
    <property type="match status" value="2"/>
</dbReference>
<dbReference type="Gene3D" id="3.40.50.1380">
    <property type="entry name" value="Methylglyoxal synthase-like domain"/>
    <property type="match status" value="1"/>
</dbReference>
<dbReference type="HAMAP" id="MF_00139">
    <property type="entry name" value="PurH"/>
    <property type="match status" value="1"/>
</dbReference>
<dbReference type="InterPro" id="IPR024051">
    <property type="entry name" value="AICAR_Tfase_dup_dom_sf"/>
</dbReference>
<dbReference type="InterPro" id="IPR016193">
    <property type="entry name" value="Cytidine_deaminase-like"/>
</dbReference>
<dbReference type="InterPro" id="IPR011607">
    <property type="entry name" value="MGS-like_dom"/>
</dbReference>
<dbReference type="InterPro" id="IPR036914">
    <property type="entry name" value="MGS-like_dom_sf"/>
</dbReference>
<dbReference type="InterPro" id="IPR002695">
    <property type="entry name" value="PurH-like"/>
</dbReference>
<dbReference type="NCBIfam" id="NF002049">
    <property type="entry name" value="PRK00881.1"/>
    <property type="match status" value="1"/>
</dbReference>
<dbReference type="NCBIfam" id="TIGR00355">
    <property type="entry name" value="purH"/>
    <property type="match status" value="1"/>
</dbReference>
<dbReference type="PANTHER" id="PTHR11692:SF0">
    <property type="entry name" value="BIFUNCTIONAL PURINE BIOSYNTHESIS PROTEIN ATIC"/>
    <property type="match status" value="1"/>
</dbReference>
<dbReference type="PANTHER" id="PTHR11692">
    <property type="entry name" value="BIFUNCTIONAL PURINE BIOSYNTHESIS PROTEIN PURH"/>
    <property type="match status" value="1"/>
</dbReference>
<dbReference type="Pfam" id="PF01808">
    <property type="entry name" value="AICARFT_IMPCHas"/>
    <property type="match status" value="1"/>
</dbReference>
<dbReference type="Pfam" id="PF02142">
    <property type="entry name" value="MGS"/>
    <property type="match status" value="1"/>
</dbReference>
<dbReference type="PIRSF" id="PIRSF000414">
    <property type="entry name" value="AICARFT_IMPCHas"/>
    <property type="match status" value="1"/>
</dbReference>
<dbReference type="SMART" id="SM00798">
    <property type="entry name" value="AICARFT_IMPCHas"/>
    <property type="match status" value="1"/>
</dbReference>
<dbReference type="SMART" id="SM00851">
    <property type="entry name" value="MGS"/>
    <property type="match status" value="1"/>
</dbReference>
<dbReference type="SUPFAM" id="SSF53927">
    <property type="entry name" value="Cytidine deaminase-like"/>
    <property type="match status" value="1"/>
</dbReference>
<dbReference type="SUPFAM" id="SSF52335">
    <property type="entry name" value="Methylglyoxal synthase-like"/>
    <property type="match status" value="1"/>
</dbReference>
<dbReference type="PROSITE" id="PS51855">
    <property type="entry name" value="MGS"/>
    <property type="match status" value="1"/>
</dbReference>
<organism>
    <name type="scientific">Streptococcus pyogenes serotype M6 (strain ATCC BAA-946 / MGAS10394)</name>
    <dbReference type="NCBI Taxonomy" id="286636"/>
    <lineage>
        <taxon>Bacteria</taxon>
        <taxon>Bacillati</taxon>
        <taxon>Bacillota</taxon>
        <taxon>Bacilli</taxon>
        <taxon>Lactobacillales</taxon>
        <taxon>Streptococcaceae</taxon>
        <taxon>Streptococcus</taxon>
    </lineage>
</organism>
<keyword id="KW-0378">Hydrolase</keyword>
<keyword id="KW-0511">Multifunctional enzyme</keyword>
<keyword id="KW-0658">Purine biosynthesis</keyword>
<keyword id="KW-0808">Transferase</keyword>